<protein>
    <recommendedName>
        <fullName>2-oxoglutarate-dependent dioxygenase AOP2</fullName>
        <ecNumber>1.14.11.-</ecNumber>
    </recommendedName>
</protein>
<sequence length="432" mass="47850">MGSCSLQLPLINLADKTLEPGSSKWAEVRSDVRKALEDFGCFEASYDKVSLELQESIMKTMEELFALPVETKQRNVCPKPYVGYLNHNNLSESLGISNANILENVNEFTQQLWPDGDGNENISKTIQLFAEKLVEIDVMVRRMVMESFGIEKYIDDHLKSTEYRMRLMKYIAPPEGDANTTVDDYADLLAKLNIDGVEPNVGVKVNADISDDVNANPSVNAGVGANVNADTGVNDNLNVDAEANGDANIAVGGGVNANTDLGVGVNVNSNVAVNAKTGATSGDDVEANDDNEEKKLGLPCHTDKNLFTVLFQHEIEGLEVKTKDEKWIRVKPSPNTFIVIAGDSLCALMNGRIRAPYHRVRVTEKKRTRYTAAIFTCPKPDYVIEAPKELVDEKHPRLFRPFDYRDLFTFYHSEAGRKIQYTLQAYCAVSEA</sequence>
<feature type="chain" id="PRO_0000423935" description="2-oxoglutarate-dependent dioxygenase AOP2">
    <location>
        <begin position="1"/>
        <end position="432"/>
    </location>
</feature>
<feature type="domain" description="Fe2OG dioxygenase" evidence="1">
    <location>
        <begin position="281"/>
        <end position="378"/>
    </location>
</feature>
<feature type="binding site" evidence="1">
    <location>
        <position position="301"/>
    </location>
    <ligand>
        <name>Fe cation</name>
        <dbReference type="ChEBI" id="CHEBI:24875"/>
    </ligand>
</feature>
<feature type="binding site" evidence="1">
    <location>
        <position position="303"/>
    </location>
    <ligand>
        <name>Fe cation</name>
        <dbReference type="ChEBI" id="CHEBI:24875"/>
    </ligand>
</feature>
<feature type="binding site" evidence="1">
    <location>
        <position position="358"/>
    </location>
    <ligand>
        <name>Fe cation</name>
        <dbReference type="ChEBI" id="CHEBI:24875"/>
    </ligand>
</feature>
<feature type="binding site" evidence="1">
    <location>
        <position position="369"/>
    </location>
    <ligand>
        <name>2-oxoglutarate</name>
        <dbReference type="ChEBI" id="CHEBI:16810"/>
    </ligand>
</feature>
<evidence type="ECO:0000255" key="1">
    <source>
        <dbReference type="PROSITE-ProRule" id="PRU00805"/>
    </source>
</evidence>
<evidence type="ECO:0000269" key="2">
    <source>
    </source>
</evidence>
<evidence type="ECO:0000305" key="3"/>
<evidence type="ECO:0000305" key="4">
    <source>
    </source>
</evidence>
<accession>Q945B5</accession>
<dbReference type="EC" id="1.14.11.-"/>
<dbReference type="EMBL" id="AF417858">
    <property type="protein sequence ID" value="AAL14646.1"/>
    <property type="molecule type" value="mRNA"/>
</dbReference>
<dbReference type="SMR" id="Q945B5"/>
<dbReference type="BioCyc" id="ARA:AT4G03060-MONOMER"/>
<dbReference type="BioCyc" id="MetaCyc:AT4G03060-MONOMER"/>
<dbReference type="ExpressionAtlas" id="Q945B5">
    <property type="expression patterns" value="baseline and differential"/>
</dbReference>
<dbReference type="GO" id="GO:0016706">
    <property type="term" value="F:2-oxoglutarate-dependent dioxygenase activity"/>
    <property type="evidence" value="ECO:0000314"/>
    <property type="project" value="UniProtKB"/>
</dbReference>
<dbReference type="GO" id="GO:0046872">
    <property type="term" value="F:metal ion binding"/>
    <property type="evidence" value="ECO:0007669"/>
    <property type="project" value="UniProtKB-KW"/>
</dbReference>
<dbReference type="GO" id="GO:0019761">
    <property type="term" value="P:glucosinolate biosynthetic process"/>
    <property type="evidence" value="ECO:0000314"/>
    <property type="project" value="UniProtKB"/>
</dbReference>
<dbReference type="FunFam" id="2.60.120.330:FF:000061">
    <property type="entry name" value="2-oxoglutarate-dependent dioxygenase AOP3"/>
    <property type="match status" value="1"/>
</dbReference>
<dbReference type="FunFam" id="2.60.120.330:FF:000062">
    <property type="entry name" value="2-oxoglutarate-dependent dioxygenase AOP3"/>
    <property type="match status" value="1"/>
</dbReference>
<dbReference type="Gene3D" id="2.60.120.330">
    <property type="entry name" value="B-lactam Antibiotic, Isopenicillin N Synthase, Chain"/>
    <property type="match status" value="2"/>
</dbReference>
<dbReference type="InterPro" id="IPR026992">
    <property type="entry name" value="DIOX_N"/>
</dbReference>
<dbReference type="InterPro" id="IPR044861">
    <property type="entry name" value="IPNS-like_FE2OG_OXY"/>
</dbReference>
<dbReference type="InterPro" id="IPR027443">
    <property type="entry name" value="IPNS-like_sf"/>
</dbReference>
<dbReference type="InterPro" id="IPR050231">
    <property type="entry name" value="Iron_ascorbate_oxido_reductase"/>
</dbReference>
<dbReference type="InterPro" id="IPR005123">
    <property type="entry name" value="Oxoglu/Fe-dep_dioxygenase_dom"/>
</dbReference>
<dbReference type="PANTHER" id="PTHR47990">
    <property type="entry name" value="2-OXOGLUTARATE (2OG) AND FE(II)-DEPENDENT OXYGENASE SUPERFAMILY PROTEIN-RELATED"/>
    <property type="match status" value="1"/>
</dbReference>
<dbReference type="Pfam" id="PF03171">
    <property type="entry name" value="2OG-FeII_Oxy"/>
    <property type="match status" value="1"/>
</dbReference>
<dbReference type="Pfam" id="PF14226">
    <property type="entry name" value="DIOX_N"/>
    <property type="match status" value="1"/>
</dbReference>
<dbReference type="SUPFAM" id="SSF51197">
    <property type="entry name" value="Clavaminate synthase-like"/>
    <property type="match status" value="1"/>
</dbReference>
<dbReference type="PROSITE" id="PS51471">
    <property type="entry name" value="FE2OG_OXY"/>
    <property type="match status" value="1"/>
</dbReference>
<reference key="1">
    <citation type="journal article" date="2001" name="Plant Cell">
        <title>Gene duplication in the diversification of secondary metabolism: tandem 2-oxoglutarate-dependent dioxygenases control glucosinolate biosynthesis in Arabidopsis.</title>
        <authorList>
            <person name="Kliebenstein D.J."/>
            <person name="Lambrix V.M."/>
            <person name="Reichelt M."/>
            <person name="Gershenzon J."/>
            <person name="Mitchell-Olds T."/>
        </authorList>
    </citation>
    <scope>NUCLEOTIDE SEQUENCE [MRNA]</scope>
    <scope>FUNCTION</scope>
    <source>
        <strain>cv. Cvi-0</strain>
    </source>
</reference>
<gene>
    <name type="primary">AOP2</name>
</gene>
<proteinExistence type="evidence at transcript level"/>
<name>AOP2V_ARATH</name>
<comment type="function">
    <text evidence="2">2-oxoglutarate-dependent dioxygenase involved in glucosinolates biosynthesis. Catalyzes the conversion of methylsulfinylalkyl glucosinolates to alkenyl glucosinolates.</text>
</comment>
<comment type="cofactor">
    <cofactor evidence="1">
        <name>Fe(2+)</name>
        <dbReference type="ChEBI" id="CHEBI:29033"/>
    </cofactor>
    <text evidence="1">Binds 1 Fe(2+) ion per subunit.</text>
</comment>
<comment type="similarity">
    <text evidence="3">Belongs to the iron/ascorbate-dependent oxidoreductase family.</text>
</comment>
<comment type="caution">
    <text evidence="4">AOP1, AOP2 and AOP3 are found in tandem and inverted duplications on chromosome IV and encode 2-oxoglutarate-dependent dioxygenases involved in glucosinolates biosynthesis. In cv. Columbia, AOP2 (AC Q9ZTA2) cDNA contains a 5-bp deletion that leads to a non-functional protein and AOP3 (AC Q9ZTA1) is not expressed. The functional and expressed alleles for AOP2 (AC Q945B5) and AOP3 (AC Q945B4) are found in cv. Cvi and cv. Landsberg erecta, respectively. No ecotype coexpresses both AOP2 and AOP3 genes. The catalytic role of AOP1 is still uncertain (PubMed:11251105).</text>
</comment>
<keyword id="KW-0223">Dioxygenase</keyword>
<keyword id="KW-0408">Iron</keyword>
<keyword id="KW-0479">Metal-binding</keyword>
<keyword id="KW-0560">Oxidoreductase</keyword>
<organism>
    <name type="scientific">Arabidopsis thaliana</name>
    <name type="common">Mouse-ear cress</name>
    <dbReference type="NCBI Taxonomy" id="3702"/>
    <lineage>
        <taxon>Eukaryota</taxon>
        <taxon>Viridiplantae</taxon>
        <taxon>Streptophyta</taxon>
        <taxon>Embryophyta</taxon>
        <taxon>Tracheophyta</taxon>
        <taxon>Spermatophyta</taxon>
        <taxon>Magnoliopsida</taxon>
        <taxon>eudicotyledons</taxon>
        <taxon>Gunneridae</taxon>
        <taxon>Pentapetalae</taxon>
        <taxon>rosids</taxon>
        <taxon>malvids</taxon>
        <taxon>Brassicales</taxon>
        <taxon>Brassicaceae</taxon>
        <taxon>Camelineae</taxon>
        <taxon>Arabidopsis</taxon>
    </lineage>
</organism>